<proteinExistence type="evidence at protein level"/>
<accession>P07860</accession>
<organism>
    <name type="scientific">Bacillus subtilis (strain 168)</name>
    <dbReference type="NCBI Taxonomy" id="224308"/>
    <lineage>
        <taxon>Bacteria</taxon>
        <taxon>Bacillati</taxon>
        <taxon>Bacillota</taxon>
        <taxon>Bacilli</taxon>
        <taxon>Bacillales</taxon>
        <taxon>Bacillaceae</taxon>
        <taxon>Bacillus</taxon>
    </lineage>
</organism>
<evidence type="ECO:0000250" key="1"/>
<evidence type="ECO:0000269" key="2">
    <source>
    </source>
</evidence>
<evidence type="ECO:0000269" key="3">
    <source>
    </source>
</evidence>
<evidence type="ECO:0000269" key="4">
    <source>
    </source>
</evidence>
<evidence type="ECO:0000269" key="5">
    <source>
    </source>
</evidence>
<evidence type="ECO:0000269" key="6">
    <source>
    </source>
</evidence>
<evidence type="ECO:0000305" key="7"/>
<evidence type="ECO:0000305" key="8">
    <source>
    </source>
</evidence>
<gene>
    <name type="primary">sigF</name>
    <name type="synonym">spoIIAC</name>
    <name type="ordered locus">BSU23450</name>
</gene>
<dbReference type="EMBL" id="M15744">
    <property type="protein sequence ID" value="AAA22788.1"/>
    <property type="molecule type" value="Genomic_DNA"/>
</dbReference>
<dbReference type="EMBL" id="M17643">
    <property type="protein sequence ID" value="AAA22791.1"/>
    <property type="status" value="ALT_FRAME"/>
    <property type="molecule type" value="Genomic_DNA"/>
</dbReference>
<dbReference type="EMBL" id="D84432">
    <property type="protein sequence ID" value="BAA12655.1"/>
    <property type="molecule type" value="Genomic_DNA"/>
</dbReference>
<dbReference type="EMBL" id="AL009126">
    <property type="protein sequence ID" value="CAB14277.1"/>
    <property type="molecule type" value="Genomic_DNA"/>
</dbReference>
<dbReference type="PIR" id="A28567">
    <property type="entry name" value="A28567"/>
</dbReference>
<dbReference type="RefSeq" id="NP_390226.1">
    <property type="nucleotide sequence ID" value="NC_000964.3"/>
</dbReference>
<dbReference type="RefSeq" id="WP_003230458.1">
    <property type="nucleotide sequence ID" value="NZ_OZ025638.1"/>
</dbReference>
<dbReference type="SMR" id="P07860"/>
<dbReference type="FunCoup" id="P07860">
    <property type="interactions" value="234"/>
</dbReference>
<dbReference type="STRING" id="224308.BSU23450"/>
<dbReference type="PaxDb" id="224308-BSU23450"/>
<dbReference type="EnsemblBacteria" id="CAB14277">
    <property type="protein sequence ID" value="CAB14277"/>
    <property type="gene ID" value="BSU_23450"/>
</dbReference>
<dbReference type="GeneID" id="938729"/>
<dbReference type="KEGG" id="bsu:BSU23450"/>
<dbReference type="PATRIC" id="fig|224308.179.peg.2555"/>
<dbReference type="eggNOG" id="COG1191">
    <property type="taxonomic scope" value="Bacteria"/>
</dbReference>
<dbReference type="InParanoid" id="P07860"/>
<dbReference type="OrthoDB" id="9809557at2"/>
<dbReference type="PhylomeDB" id="P07860"/>
<dbReference type="BioCyc" id="BSUB:BSU23450-MONOMER"/>
<dbReference type="Proteomes" id="UP000001570">
    <property type="component" value="Chromosome"/>
</dbReference>
<dbReference type="GO" id="GO:0003677">
    <property type="term" value="F:DNA binding"/>
    <property type="evidence" value="ECO:0007669"/>
    <property type="project" value="UniProtKB-KW"/>
</dbReference>
<dbReference type="GO" id="GO:0016987">
    <property type="term" value="F:sigma factor activity"/>
    <property type="evidence" value="ECO:0007669"/>
    <property type="project" value="UniProtKB-KW"/>
</dbReference>
<dbReference type="GO" id="GO:0006352">
    <property type="term" value="P:DNA-templated transcription initiation"/>
    <property type="evidence" value="ECO:0007669"/>
    <property type="project" value="InterPro"/>
</dbReference>
<dbReference type="GO" id="GO:0030435">
    <property type="term" value="P:sporulation resulting in formation of a cellular spore"/>
    <property type="evidence" value="ECO:0007669"/>
    <property type="project" value="UniProtKB-KW"/>
</dbReference>
<dbReference type="CDD" id="cd06171">
    <property type="entry name" value="Sigma70_r4"/>
    <property type="match status" value="1"/>
</dbReference>
<dbReference type="Gene3D" id="1.20.120.1810">
    <property type="match status" value="1"/>
</dbReference>
<dbReference type="Gene3D" id="1.10.10.10">
    <property type="entry name" value="Winged helix-like DNA-binding domain superfamily/Winged helix DNA-binding domain"/>
    <property type="match status" value="2"/>
</dbReference>
<dbReference type="InterPro" id="IPR001387">
    <property type="entry name" value="Cro/C1-type_HTH"/>
</dbReference>
<dbReference type="InterPro" id="IPR014284">
    <property type="entry name" value="RNA_pol_sigma-70_dom"/>
</dbReference>
<dbReference type="InterPro" id="IPR014322">
    <property type="entry name" value="RNA_pol_sigma-B/F/G"/>
</dbReference>
<dbReference type="InterPro" id="IPR014236">
    <property type="entry name" value="RNA_pol_sigma-F"/>
</dbReference>
<dbReference type="InterPro" id="IPR000943">
    <property type="entry name" value="RNA_pol_sigma70"/>
</dbReference>
<dbReference type="InterPro" id="IPR007627">
    <property type="entry name" value="RNA_pol_sigma70_r2"/>
</dbReference>
<dbReference type="InterPro" id="IPR007624">
    <property type="entry name" value="RNA_pol_sigma70_r3"/>
</dbReference>
<dbReference type="InterPro" id="IPR007630">
    <property type="entry name" value="RNA_pol_sigma70_r4"/>
</dbReference>
<dbReference type="InterPro" id="IPR013325">
    <property type="entry name" value="RNA_pol_sigma_r2"/>
</dbReference>
<dbReference type="InterPro" id="IPR013324">
    <property type="entry name" value="RNA_pol_sigma_r3/r4-like"/>
</dbReference>
<dbReference type="InterPro" id="IPR050239">
    <property type="entry name" value="Sigma-70_RNA_pol_init_factors"/>
</dbReference>
<dbReference type="InterPro" id="IPR036388">
    <property type="entry name" value="WH-like_DNA-bd_sf"/>
</dbReference>
<dbReference type="NCBIfam" id="NF004052">
    <property type="entry name" value="PRK05572.1"/>
    <property type="match status" value="1"/>
</dbReference>
<dbReference type="NCBIfam" id="TIGR02980">
    <property type="entry name" value="SigBFG"/>
    <property type="match status" value="1"/>
</dbReference>
<dbReference type="NCBIfam" id="TIGR02937">
    <property type="entry name" value="sigma70-ECF"/>
    <property type="match status" value="1"/>
</dbReference>
<dbReference type="NCBIfam" id="TIGR02885">
    <property type="entry name" value="spore_sigF"/>
    <property type="match status" value="1"/>
</dbReference>
<dbReference type="PANTHER" id="PTHR30603">
    <property type="entry name" value="RNA POLYMERASE SIGMA FACTOR RPO"/>
    <property type="match status" value="1"/>
</dbReference>
<dbReference type="PANTHER" id="PTHR30603:SF19">
    <property type="entry name" value="RNA POLYMERASE SIGMA-F FACTOR"/>
    <property type="match status" value="1"/>
</dbReference>
<dbReference type="Pfam" id="PF04542">
    <property type="entry name" value="Sigma70_r2"/>
    <property type="match status" value="1"/>
</dbReference>
<dbReference type="Pfam" id="PF04539">
    <property type="entry name" value="Sigma70_r3"/>
    <property type="match status" value="1"/>
</dbReference>
<dbReference type="Pfam" id="PF04545">
    <property type="entry name" value="Sigma70_r4"/>
    <property type="match status" value="1"/>
</dbReference>
<dbReference type="PIRSF" id="PIRSF000770">
    <property type="entry name" value="RNA_pol_sigma-SigE/K"/>
    <property type="match status" value="1"/>
</dbReference>
<dbReference type="PRINTS" id="PR00046">
    <property type="entry name" value="SIGMA70FCT"/>
</dbReference>
<dbReference type="SUPFAM" id="SSF88946">
    <property type="entry name" value="Sigma2 domain of RNA polymerase sigma factors"/>
    <property type="match status" value="1"/>
</dbReference>
<dbReference type="SUPFAM" id="SSF88659">
    <property type="entry name" value="Sigma3 and sigma4 domains of RNA polymerase sigma factors"/>
    <property type="match status" value="2"/>
</dbReference>
<dbReference type="PROSITE" id="PS00715">
    <property type="entry name" value="SIGMA70_1"/>
    <property type="match status" value="1"/>
</dbReference>
<dbReference type="PROSITE" id="PS00716">
    <property type="entry name" value="SIGMA70_2"/>
    <property type="match status" value="1"/>
</dbReference>
<keyword id="KW-0903">Direct protein sequencing</keyword>
<keyword id="KW-0238">DNA-binding</keyword>
<keyword id="KW-1185">Reference proteome</keyword>
<keyword id="KW-0731">Sigma factor</keyword>
<keyword id="KW-0749">Sporulation</keyword>
<keyword id="KW-0804">Transcription</keyword>
<keyword id="KW-0805">Transcription regulation</keyword>
<name>RPSF_BACSU</name>
<feature type="chain" id="PRO_0000093943" description="RNA polymerase sigma-F factor">
    <location>
        <begin position="1"/>
        <end position="255"/>
    </location>
</feature>
<feature type="DNA-binding region" description="H-T-H motif" evidence="1">
    <location>
        <begin position="221"/>
        <end position="240"/>
    </location>
</feature>
<feature type="short sequence motif" description="Polymerase core binding">
    <location>
        <begin position="61"/>
        <end position="74"/>
    </location>
</feature>
<feature type="mutagenesis site" description="In spo-563; 10(6)-fold decrease in spore production, 50% induction of sporulation-associated enzymes." evidence="4">
    <original>S</original>
    <variation>F</variation>
    <location>
        <position position="73"/>
    </location>
</feature>
<feature type="mutagenesis site" description="In spo-578; no spores develop, no induction of sporulation-associated enzymes." evidence="4">
    <location>
        <begin position="99"/>
        <end position="255"/>
    </location>
</feature>
<feature type="mutagenesis site" description="In spo-564; 1000-fold decrease in spore production, 50% induction of sporulation-associated enzymes." evidence="4">
    <original>R</original>
    <variation>Q</variation>
    <location>
        <position position="111"/>
    </location>
</feature>
<feature type="mutagenesis site" description="In spo-561; 10(6)-fold decrease in spore production, 50% induction of sporulation-associated enzymes." evidence="4">
    <original>V</original>
    <variation>M</variation>
    <location>
        <position position="233"/>
    </location>
</feature>
<feature type="mutagenesis site" description="In spo-560; 1000-fold decrease in spore production, 50% induction of sporulation-associated enzymes." evidence="4">
    <original>R</original>
    <variation>K</variation>
    <location>
        <position position="237"/>
    </location>
</feature>
<feature type="mutagenesis site" description="In spo-1; no spores develop, no induction of sporulation-associated enzymes." evidence="4">
    <location>
        <begin position="245"/>
        <end position="255"/>
    </location>
</feature>
<sequence length="255" mass="29372">MDVEVKKNGKNAQLKDHEVKELIKQSQNGDQQARDLLIEKNMRLVWSVVQRFLNRGYEPDDLFQIGCIGLLKSVDKFDLTYDVRFSTYAVPMIIGEIQRFIRDDGTVKVSRSLKELGNKIRRAKDELSKTLGRVPTVQEIADHLEIEAEDVVLAQEAVRAPSSIHETVYENDGDPITLLDQIADNSEEKWFDKIALKEAISDLEEREKLIVYLRYYKDQTQSEVAERLGISQVQVSRLEKKILKQIKVQMDHTDG</sequence>
<reference key="1">
    <citation type="journal article" date="1987" name="J. Gen. Microbiol.">
        <title>Structure and function in a Bacillus subtilis sporulation-specific sigma factor: molecular nature of mutations in spoIIAC.</title>
        <authorList>
            <person name="Yudkin M.D."/>
        </authorList>
    </citation>
    <scope>NUCLEOTIDE SEQUENCE [GENOMIC DNA]</scope>
    <scope>DISRUPTION PHENOTYPE</scope>
    <scope>MUTAGENESIS OF SER-73; 99-ARG--GLY-255; ARG-111; VAL-233; ARG-237 AND 245-GLN--GLY-255</scope>
    <source>
        <strain>168 / PY79</strain>
    </source>
</reference>
<reference key="2">
    <citation type="journal article" date="1984" name="J. Gen. Microbiol.">
        <title>Nucleotide sequence of sporulation locus spoIIA in Bacillus subtilis.</title>
        <authorList>
            <person name="Fort P."/>
            <person name="Piggot P.J."/>
        </authorList>
    </citation>
    <scope>NUCLEOTIDE SEQUENCE [GENOMIC DNA]</scope>
    <source>
        <strain>168 / PY79</strain>
    </source>
</reference>
<reference key="3">
    <citation type="journal article" date="1996" name="Microbiology">
        <title>Systematic sequencing of the 283 kb 210 degrees-232 degrees region of the Bacillus subtilis genome containing the skin element and many sporulation genes.</title>
        <authorList>
            <person name="Mizuno M."/>
            <person name="Masuda S."/>
            <person name="Takemaru K."/>
            <person name="Hosono S."/>
            <person name="Sato T."/>
            <person name="Takeuchi M."/>
            <person name="Kobayashi Y."/>
        </authorList>
    </citation>
    <scope>NUCLEOTIDE SEQUENCE [GENOMIC DNA]</scope>
    <source>
        <strain>168 / JH642</strain>
    </source>
</reference>
<reference key="4">
    <citation type="journal article" date="1997" name="Nature">
        <title>The complete genome sequence of the Gram-positive bacterium Bacillus subtilis.</title>
        <authorList>
            <person name="Kunst F."/>
            <person name="Ogasawara N."/>
            <person name="Moszer I."/>
            <person name="Albertini A.M."/>
            <person name="Alloni G."/>
            <person name="Azevedo V."/>
            <person name="Bertero M.G."/>
            <person name="Bessieres P."/>
            <person name="Bolotin A."/>
            <person name="Borchert S."/>
            <person name="Borriss R."/>
            <person name="Boursier L."/>
            <person name="Brans A."/>
            <person name="Braun M."/>
            <person name="Brignell S.C."/>
            <person name="Bron S."/>
            <person name="Brouillet S."/>
            <person name="Bruschi C.V."/>
            <person name="Caldwell B."/>
            <person name="Capuano V."/>
            <person name="Carter N.M."/>
            <person name="Choi S.-K."/>
            <person name="Codani J.-J."/>
            <person name="Connerton I.F."/>
            <person name="Cummings N.J."/>
            <person name="Daniel R.A."/>
            <person name="Denizot F."/>
            <person name="Devine K.M."/>
            <person name="Duesterhoeft A."/>
            <person name="Ehrlich S.D."/>
            <person name="Emmerson P.T."/>
            <person name="Entian K.-D."/>
            <person name="Errington J."/>
            <person name="Fabret C."/>
            <person name="Ferrari E."/>
            <person name="Foulger D."/>
            <person name="Fritz C."/>
            <person name="Fujita M."/>
            <person name="Fujita Y."/>
            <person name="Fuma S."/>
            <person name="Galizzi A."/>
            <person name="Galleron N."/>
            <person name="Ghim S.-Y."/>
            <person name="Glaser P."/>
            <person name="Goffeau A."/>
            <person name="Golightly E.J."/>
            <person name="Grandi G."/>
            <person name="Guiseppi G."/>
            <person name="Guy B.J."/>
            <person name="Haga K."/>
            <person name="Haiech J."/>
            <person name="Harwood C.R."/>
            <person name="Henaut A."/>
            <person name="Hilbert H."/>
            <person name="Holsappel S."/>
            <person name="Hosono S."/>
            <person name="Hullo M.-F."/>
            <person name="Itaya M."/>
            <person name="Jones L.-M."/>
            <person name="Joris B."/>
            <person name="Karamata D."/>
            <person name="Kasahara Y."/>
            <person name="Klaerr-Blanchard M."/>
            <person name="Klein C."/>
            <person name="Kobayashi Y."/>
            <person name="Koetter P."/>
            <person name="Koningstein G."/>
            <person name="Krogh S."/>
            <person name="Kumano M."/>
            <person name="Kurita K."/>
            <person name="Lapidus A."/>
            <person name="Lardinois S."/>
            <person name="Lauber J."/>
            <person name="Lazarevic V."/>
            <person name="Lee S.-M."/>
            <person name="Levine A."/>
            <person name="Liu H."/>
            <person name="Masuda S."/>
            <person name="Mauel C."/>
            <person name="Medigue C."/>
            <person name="Medina N."/>
            <person name="Mellado R.P."/>
            <person name="Mizuno M."/>
            <person name="Moestl D."/>
            <person name="Nakai S."/>
            <person name="Noback M."/>
            <person name="Noone D."/>
            <person name="O'Reilly M."/>
            <person name="Ogawa K."/>
            <person name="Ogiwara A."/>
            <person name="Oudega B."/>
            <person name="Park S.-H."/>
            <person name="Parro V."/>
            <person name="Pohl T.M."/>
            <person name="Portetelle D."/>
            <person name="Porwollik S."/>
            <person name="Prescott A.M."/>
            <person name="Presecan E."/>
            <person name="Pujic P."/>
            <person name="Purnelle B."/>
            <person name="Rapoport G."/>
            <person name="Rey M."/>
            <person name="Reynolds S."/>
            <person name="Rieger M."/>
            <person name="Rivolta C."/>
            <person name="Rocha E."/>
            <person name="Roche B."/>
            <person name="Rose M."/>
            <person name="Sadaie Y."/>
            <person name="Sato T."/>
            <person name="Scanlan E."/>
            <person name="Schleich S."/>
            <person name="Schroeter R."/>
            <person name="Scoffone F."/>
            <person name="Sekiguchi J."/>
            <person name="Sekowska A."/>
            <person name="Seror S.J."/>
            <person name="Serror P."/>
            <person name="Shin B.-S."/>
            <person name="Soldo B."/>
            <person name="Sorokin A."/>
            <person name="Tacconi E."/>
            <person name="Takagi T."/>
            <person name="Takahashi H."/>
            <person name="Takemaru K."/>
            <person name="Takeuchi M."/>
            <person name="Tamakoshi A."/>
            <person name="Tanaka T."/>
            <person name="Terpstra P."/>
            <person name="Tognoni A."/>
            <person name="Tosato V."/>
            <person name="Uchiyama S."/>
            <person name="Vandenbol M."/>
            <person name="Vannier F."/>
            <person name="Vassarotti A."/>
            <person name="Viari A."/>
            <person name="Wambutt R."/>
            <person name="Wedler E."/>
            <person name="Wedler H."/>
            <person name="Weitzenegger T."/>
            <person name="Winters P."/>
            <person name="Wipat A."/>
            <person name="Yamamoto H."/>
            <person name="Yamane K."/>
            <person name="Yasumoto K."/>
            <person name="Yata K."/>
            <person name="Yoshida K."/>
            <person name="Yoshikawa H.-F."/>
            <person name="Zumstein E."/>
            <person name="Yoshikawa H."/>
            <person name="Danchin A."/>
        </authorList>
    </citation>
    <scope>NUCLEOTIDE SEQUENCE [LARGE SCALE GENOMIC DNA]</scope>
    <source>
        <strain>168</strain>
    </source>
</reference>
<reference key="5">
    <citation type="journal article" date="1993" name="Cell">
        <title>Sigma F, the first compartment-specific transcription factor of B. subtilis, is regulated by an anti-sigma factor that is also a protein kinase.</title>
        <authorList>
            <person name="Min K.-T."/>
            <person name="Hilditch C.M."/>
            <person name="Diederich B."/>
            <person name="Errington J."/>
            <person name="Yudkin M.D."/>
        </authorList>
    </citation>
    <scope>PROTEIN SEQUENCE OF 1-10</scope>
    <scope>FUNCTION</scope>
    <scope>ACTIVITY REGULATION</scope>
    <scope>DEVELOPMENTAL STAGE</scope>
    <source>
        <strain>CU267</strain>
    </source>
</reference>
<reference key="6">
    <citation type="journal article" date="1996" name="J. Bacteriol.">
        <title>Identification of additional genes under the control of the transcription factor sigma F of Bacillus subtilis.</title>
        <authorList>
            <person name="Decatur A."/>
            <person name="Losick R."/>
        </authorList>
    </citation>
    <scope>FUNCTION</scope>
    <scope>REGULON</scope>
    <source>
        <strain>168 / PY79</strain>
    </source>
</reference>
<reference key="7">
    <citation type="journal article" date="2011" name="J. Bacteriol.">
        <title>A small protein required for the switch from {sigma}F to {sigma}G during sporulation in Bacillus subtilis.</title>
        <authorList>
            <person name="Camp A.H."/>
            <person name="Wang A.F."/>
            <person name="Losick R."/>
        </authorList>
    </citation>
    <scope>FUNCTION</scope>
    <scope>ACTIVITY REGULATION</scope>
    <source>
        <strain>168 / PY79</strain>
    </source>
</reference>
<reference key="8">
    <citation type="journal article" date="2011" name="Proteomics">
        <title>The dynamic protein partnership of RNA polymerase in Bacillus subtilis.</title>
        <authorList>
            <person name="Delumeau O."/>
            <person name="Lecointe F."/>
            <person name="Muntel J."/>
            <person name="Guillot A."/>
            <person name="Guedon E."/>
            <person name="Monnet V."/>
            <person name="Hecker M."/>
            <person name="Becher D."/>
            <person name="Polard P."/>
            <person name="Noirot P."/>
        </authorList>
    </citation>
    <scope>FUNCTION</scope>
    <scope>SUBUNIT</scope>
    <scope>INDUCTION BY SPORULATION</scope>
    <source>
        <strain>168</strain>
    </source>
</reference>
<protein>
    <recommendedName>
        <fullName>RNA polymerase sigma-F factor</fullName>
    </recommendedName>
    <alternativeName>
        <fullName>Sporulation sigma factor</fullName>
    </alternativeName>
    <alternativeName>
        <fullName>Stage II sporulation protein AC</fullName>
    </alternativeName>
</protein>
<comment type="function">
    <text evidence="3 6">Sigma factors are initiation factors that promote the attachment of RNA polymerase to specific initiation sites and are then released. This sigma factor is responsible for the expression of sporulation specific genes (PubMed:8759874). Interaction with SpoIIAB inhibits sigma-F activity throughout the cell before the formation of the asymmetric septum; after septation the interaction is confined to the mother cell, and sigma F activity is released in the prespore. Responsible for expression of csfB (the anti-sigma-G factor Gin) (PubMed:8759874). Associates with the RNAP core only in stationary phase cells (PubMed:21710567).</text>
</comment>
<comment type="activity regulation">
    <text evidence="2 5">Interaction with SpoIIAB inhibits sigma-F activity throughout the cell before the formation of the asymmetric septum; after septation the interaction is confined to the mother cell, and sigma-F activity is released in the prespore (PubMed:8358793). Fin, a second, forespore-specific anti-sigma factor is induced in 2 successive waves by sigma-F and sigma-G, by antagonizing sigma-F it allows the switch to sigma-G factor and progression to the late sporulation development stages (PubMed:21037003).</text>
</comment>
<comment type="subunit">
    <text evidence="8">Interacts transiently with the RNAP core.</text>
</comment>
<comment type="developmental stage">
    <text evidence="5 8">Produced in the predivisional sporangium, but does not become active in directing gene expression until after septum formation when its activity is restricted to the forespore (at protein level).</text>
</comment>
<comment type="induction">
    <text evidence="3">Association with RNAP core increases during sporulation but not tested stresses (at protein level).</text>
</comment>
<comment type="disruption phenotype">
    <text evidence="4">In spo-63 (loss of residues 27-255); no spores develop, no induction of sporulation-associated enzymes.</text>
</comment>
<comment type="similarity">
    <text evidence="7">Belongs to the sigma-70 factor family.</text>
</comment>
<comment type="sequence caution" evidence="7">
    <conflict type="frameshift">
        <sequence resource="EMBL-CDS" id="AAA22791"/>
    </conflict>
</comment>